<proteinExistence type="inferred from homology"/>
<reference key="1">
    <citation type="journal article" date="2005" name="Science">
        <title>Extensive DNA inversions in the B. fragilis genome control variable gene expression.</title>
        <authorList>
            <person name="Cerdeno-Tarraga A.-M."/>
            <person name="Patrick S."/>
            <person name="Crossman L.C."/>
            <person name="Blakely G."/>
            <person name="Abratt V."/>
            <person name="Lennard N."/>
            <person name="Poxton I."/>
            <person name="Duerden B."/>
            <person name="Harris B."/>
            <person name="Quail M.A."/>
            <person name="Barron A."/>
            <person name="Clark L."/>
            <person name="Corton C."/>
            <person name="Doggett J."/>
            <person name="Holden M.T.G."/>
            <person name="Larke N."/>
            <person name="Line A."/>
            <person name="Lord A."/>
            <person name="Norbertczak H."/>
            <person name="Ormond D."/>
            <person name="Price C."/>
            <person name="Rabbinowitsch E."/>
            <person name="Woodward J."/>
            <person name="Barrell B.G."/>
            <person name="Parkhill J."/>
        </authorList>
    </citation>
    <scope>NUCLEOTIDE SEQUENCE [LARGE SCALE GENOMIC DNA]</scope>
    <source>
        <strain>ATCC 25285 / DSM 2151 / CCUG 4856 / JCM 11019 / LMG 10263 / NCTC 9343 / Onslow / VPI 2553 / EN-2</strain>
    </source>
</reference>
<keyword id="KW-0030">Aminoacyl-tRNA synthetase</keyword>
<keyword id="KW-0067">ATP-binding</keyword>
<keyword id="KW-0963">Cytoplasm</keyword>
<keyword id="KW-0436">Ligase</keyword>
<keyword id="KW-0547">Nucleotide-binding</keyword>
<keyword id="KW-0648">Protein biosynthesis</keyword>
<sequence>MAAKPGIPKGTRDFSPVEMAKRNYIFNTIRDVYHLYGFQQIETPSMEMLSTLMGKYGEEGDKLLFKIQNSGNYFSGITDEELLSRNAAKLASKFCEKGLRYDLTVPFARYVVMHRDEITFPFKRYQIQPVWRADRPQKGRYREFYQCDADVVGSDSLLNEVELMQIVDTVFTRFGIRVCIKINNRKILTGIAEIIGEADKIVDITVAIDKLDKIGLDNVNKELAEKGISGEAIAKLQPIILLSGTNAEKLATLKTVLSDSETGLKGVEESEFILNTLQTMGLKNEIELDLTLARGLNYYTGAIFEVKALDVQIGSITGGGRYDNLTGVFGMAGVSGVGISFGADRIFDVLNQLELYPKEAVNGTQLLFINFGEKEAAFSMGILSKARAAGIRAEIFPDAAKMKKQMSYANVKNIPFVAIVGENEMNEGKAMLKNMESGEQQLVTAEELIGALTK</sequence>
<protein>
    <recommendedName>
        <fullName evidence="1">Histidine--tRNA ligase</fullName>
        <ecNumber evidence="1">6.1.1.21</ecNumber>
    </recommendedName>
    <alternativeName>
        <fullName evidence="1">Histidyl-tRNA synthetase</fullName>
        <shortName evidence="1">HisRS</shortName>
    </alternativeName>
</protein>
<dbReference type="EC" id="6.1.1.21" evidence="1"/>
<dbReference type="EMBL" id="CR626927">
    <property type="protein sequence ID" value="CAH08933.1"/>
    <property type="molecule type" value="Genomic_DNA"/>
</dbReference>
<dbReference type="RefSeq" id="WP_010993322.1">
    <property type="nucleotide sequence ID" value="NC_003228.3"/>
</dbReference>
<dbReference type="SMR" id="Q5LAE0"/>
<dbReference type="PaxDb" id="272559-BF9343_3152"/>
<dbReference type="GeneID" id="60367292"/>
<dbReference type="KEGG" id="bfs:BF9343_3152"/>
<dbReference type="eggNOG" id="COG0124">
    <property type="taxonomic scope" value="Bacteria"/>
</dbReference>
<dbReference type="HOGENOM" id="CLU_025113_3_0_10"/>
<dbReference type="Proteomes" id="UP000006731">
    <property type="component" value="Chromosome"/>
</dbReference>
<dbReference type="GO" id="GO:0005737">
    <property type="term" value="C:cytoplasm"/>
    <property type="evidence" value="ECO:0007669"/>
    <property type="project" value="UniProtKB-SubCell"/>
</dbReference>
<dbReference type="GO" id="GO:0005524">
    <property type="term" value="F:ATP binding"/>
    <property type="evidence" value="ECO:0007669"/>
    <property type="project" value="UniProtKB-UniRule"/>
</dbReference>
<dbReference type="GO" id="GO:0004821">
    <property type="term" value="F:histidine-tRNA ligase activity"/>
    <property type="evidence" value="ECO:0007669"/>
    <property type="project" value="UniProtKB-UniRule"/>
</dbReference>
<dbReference type="GO" id="GO:0006427">
    <property type="term" value="P:histidyl-tRNA aminoacylation"/>
    <property type="evidence" value="ECO:0007669"/>
    <property type="project" value="UniProtKB-UniRule"/>
</dbReference>
<dbReference type="CDD" id="cd00773">
    <property type="entry name" value="HisRS-like_core"/>
    <property type="match status" value="1"/>
</dbReference>
<dbReference type="CDD" id="cd00859">
    <property type="entry name" value="HisRS_anticodon"/>
    <property type="match status" value="1"/>
</dbReference>
<dbReference type="FunFam" id="3.30.930.10:FF:000093">
    <property type="entry name" value="Histidine--tRNA ligase"/>
    <property type="match status" value="1"/>
</dbReference>
<dbReference type="Gene3D" id="3.40.50.800">
    <property type="entry name" value="Anticodon-binding domain"/>
    <property type="match status" value="1"/>
</dbReference>
<dbReference type="Gene3D" id="3.30.930.10">
    <property type="entry name" value="Bira Bifunctional Protein, Domain 2"/>
    <property type="match status" value="1"/>
</dbReference>
<dbReference type="HAMAP" id="MF_00127">
    <property type="entry name" value="His_tRNA_synth"/>
    <property type="match status" value="1"/>
</dbReference>
<dbReference type="InterPro" id="IPR006195">
    <property type="entry name" value="aa-tRNA-synth_II"/>
</dbReference>
<dbReference type="InterPro" id="IPR045864">
    <property type="entry name" value="aa-tRNA-synth_II/BPL/LPL"/>
</dbReference>
<dbReference type="InterPro" id="IPR004154">
    <property type="entry name" value="Anticodon-bd"/>
</dbReference>
<dbReference type="InterPro" id="IPR036621">
    <property type="entry name" value="Anticodon-bd_dom_sf"/>
</dbReference>
<dbReference type="InterPro" id="IPR015807">
    <property type="entry name" value="His-tRNA-ligase"/>
</dbReference>
<dbReference type="InterPro" id="IPR041715">
    <property type="entry name" value="HisRS-like_core"/>
</dbReference>
<dbReference type="InterPro" id="IPR004516">
    <property type="entry name" value="HisRS/HisZ"/>
</dbReference>
<dbReference type="InterPro" id="IPR033656">
    <property type="entry name" value="HisRS_anticodon"/>
</dbReference>
<dbReference type="NCBIfam" id="TIGR00442">
    <property type="entry name" value="hisS"/>
    <property type="match status" value="1"/>
</dbReference>
<dbReference type="PANTHER" id="PTHR11476:SF7">
    <property type="entry name" value="HISTIDINE--TRNA LIGASE"/>
    <property type="match status" value="1"/>
</dbReference>
<dbReference type="PANTHER" id="PTHR11476">
    <property type="entry name" value="HISTIDYL-TRNA SYNTHETASE"/>
    <property type="match status" value="1"/>
</dbReference>
<dbReference type="Pfam" id="PF03129">
    <property type="entry name" value="HGTP_anticodon"/>
    <property type="match status" value="1"/>
</dbReference>
<dbReference type="Pfam" id="PF13393">
    <property type="entry name" value="tRNA-synt_His"/>
    <property type="match status" value="2"/>
</dbReference>
<dbReference type="PIRSF" id="PIRSF001549">
    <property type="entry name" value="His-tRNA_synth"/>
    <property type="match status" value="1"/>
</dbReference>
<dbReference type="SUPFAM" id="SSF52954">
    <property type="entry name" value="Class II aaRS ABD-related"/>
    <property type="match status" value="1"/>
</dbReference>
<dbReference type="SUPFAM" id="SSF55681">
    <property type="entry name" value="Class II aaRS and biotin synthetases"/>
    <property type="match status" value="1"/>
</dbReference>
<dbReference type="PROSITE" id="PS50862">
    <property type="entry name" value="AA_TRNA_LIGASE_II"/>
    <property type="match status" value="1"/>
</dbReference>
<gene>
    <name evidence="1" type="primary">hisS</name>
    <name type="ordered locus">BF3238</name>
</gene>
<organism>
    <name type="scientific">Bacteroides fragilis (strain ATCC 25285 / DSM 2151 / CCUG 4856 / JCM 11019 / LMG 10263 / NCTC 9343 / Onslow / VPI 2553 / EN-2)</name>
    <dbReference type="NCBI Taxonomy" id="272559"/>
    <lineage>
        <taxon>Bacteria</taxon>
        <taxon>Pseudomonadati</taxon>
        <taxon>Bacteroidota</taxon>
        <taxon>Bacteroidia</taxon>
        <taxon>Bacteroidales</taxon>
        <taxon>Bacteroidaceae</taxon>
        <taxon>Bacteroides</taxon>
    </lineage>
</organism>
<feature type="chain" id="PRO_0000136109" description="Histidine--tRNA ligase">
    <location>
        <begin position="1"/>
        <end position="454"/>
    </location>
</feature>
<accession>Q5LAE0</accession>
<evidence type="ECO:0000255" key="1">
    <source>
        <dbReference type="HAMAP-Rule" id="MF_00127"/>
    </source>
</evidence>
<name>SYH_BACFN</name>
<comment type="catalytic activity">
    <reaction evidence="1">
        <text>tRNA(His) + L-histidine + ATP = L-histidyl-tRNA(His) + AMP + diphosphate + H(+)</text>
        <dbReference type="Rhea" id="RHEA:17313"/>
        <dbReference type="Rhea" id="RHEA-COMP:9665"/>
        <dbReference type="Rhea" id="RHEA-COMP:9689"/>
        <dbReference type="ChEBI" id="CHEBI:15378"/>
        <dbReference type="ChEBI" id="CHEBI:30616"/>
        <dbReference type="ChEBI" id="CHEBI:33019"/>
        <dbReference type="ChEBI" id="CHEBI:57595"/>
        <dbReference type="ChEBI" id="CHEBI:78442"/>
        <dbReference type="ChEBI" id="CHEBI:78527"/>
        <dbReference type="ChEBI" id="CHEBI:456215"/>
        <dbReference type="EC" id="6.1.1.21"/>
    </reaction>
</comment>
<comment type="subunit">
    <text evidence="1">Homodimer.</text>
</comment>
<comment type="subcellular location">
    <subcellularLocation>
        <location evidence="1">Cytoplasm</location>
    </subcellularLocation>
</comment>
<comment type="similarity">
    <text evidence="1">Belongs to the class-II aminoacyl-tRNA synthetase family.</text>
</comment>